<organism>
    <name type="scientific">Deinococcus geothermalis (strain DSM 11300 / CIP 105573 / AG-3a)</name>
    <dbReference type="NCBI Taxonomy" id="319795"/>
    <lineage>
        <taxon>Bacteria</taxon>
        <taxon>Thermotogati</taxon>
        <taxon>Deinococcota</taxon>
        <taxon>Deinococci</taxon>
        <taxon>Deinococcales</taxon>
        <taxon>Deinococcaceae</taxon>
        <taxon>Deinococcus</taxon>
    </lineage>
</organism>
<sequence length="408" mass="43879">MDLIETVRPLAKKTDSKILMVVLDGVGGLPLTVNGETELATAKTPHLDALAAESQLGLVELVAAGITPGSGPGHLSLFGYDPLKYVVGRGALSAVGIGVKLNAGDVAVRGNFASLGESRLIIDRRAGRPSNEKNAEVVAKLRAAIPEIDGTPVEIYSESEHRFVVVFRATGTPLGADVSDVDPQVTGVPPRTAMAHDPASERTAHLVNAFVTRAEAALADESQVNGVLFRGYSDVPHFPNFDEIYQLRAACIASYPMYKGLASLVGMDVLPVEGEEDALAGKVAALKEHWHDYDFFYWHVKKTDSTGEDGDFAAKVKKIELFDALLPELRALQPDVLCIVGDHSTPSKLASHSWHPVPLLINSRYGRKDLAQRYTEEEAQKGSLGLRRGTDVMPLLMANALKLQKYGA</sequence>
<proteinExistence type="inferred from homology"/>
<reference key="1">
    <citation type="submission" date="2006-04" db="EMBL/GenBank/DDBJ databases">
        <title>Complete sequence of chromosome of Deinococcus geothermalis DSM 11300.</title>
        <authorList>
            <person name="Copeland A."/>
            <person name="Lucas S."/>
            <person name="Lapidus A."/>
            <person name="Barry K."/>
            <person name="Detter J.C."/>
            <person name="Glavina del Rio T."/>
            <person name="Hammon N."/>
            <person name="Israni S."/>
            <person name="Dalin E."/>
            <person name="Tice H."/>
            <person name="Pitluck S."/>
            <person name="Brettin T."/>
            <person name="Bruce D."/>
            <person name="Han C."/>
            <person name="Tapia R."/>
            <person name="Saunders E."/>
            <person name="Gilna P."/>
            <person name="Schmutz J."/>
            <person name="Larimer F."/>
            <person name="Land M."/>
            <person name="Hauser L."/>
            <person name="Kyrpides N."/>
            <person name="Kim E."/>
            <person name="Daly M.J."/>
            <person name="Fredrickson J.K."/>
            <person name="Makarova K.S."/>
            <person name="Gaidamakova E.K."/>
            <person name="Zhai M."/>
            <person name="Richardson P."/>
        </authorList>
    </citation>
    <scope>NUCLEOTIDE SEQUENCE [LARGE SCALE GENOMIC DNA]</scope>
    <source>
        <strain>DSM 11300 / CIP 105573 / AG-3a</strain>
    </source>
</reference>
<accession>Q1IW58</accession>
<name>APGM_DEIGD</name>
<evidence type="ECO:0000255" key="1">
    <source>
        <dbReference type="HAMAP-Rule" id="MF_01402"/>
    </source>
</evidence>
<keyword id="KW-0324">Glycolysis</keyword>
<keyword id="KW-0413">Isomerase</keyword>
<gene>
    <name evidence="1" type="primary">apgM</name>
    <name type="ordered locus">Dgeo_2232</name>
</gene>
<dbReference type="EC" id="5.4.2.12" evidence="1"/>
<dbReference type="EMBL" id="CP000359">
    <property type="protein sequence ID" value="ABF46526.1"/>
    <property type="molecule type" value="Genomic_DNA"/>
</dbReference>
<dbReference type="RefSeq" id="WP_011531347.1">
    <property type="nucleotide sequence ID" value="NC_008025.1"/>
</dbReference>
<dbReference type="SMR" id="Q1IW58"/>
<dbReference type="STRING" id="319795.Dgeo_2232"/>
<dbReference type="KEGG" id="dge:Dgeo_2232"/>
<dbReference type="eggNOG" id="COG3635">
    <property type="taxonomic scope" value="Bacteria"/>
</dbReference>
<dbReference type="HOGENOM" id="CLU_034906_2_0_0"/>
<dbReference type="UniPathway" id="UPA00109">
    <property type="reaction ID" value="UER00186"/>
</dbReference>
<dbReference type="Proteomes" id="UP000002431">
    <property type="component" value="Chromosome"/>
</dbReference>
<dbReference type="GO" id="GO:0046872">
    <property type="term" value="F:metal ion binding"/>
    <property type="evidence" value="ECO:0007669"/>
    <property type="project" value="InterPro"/>
</dbReference>
<dbReference type="GO" id="GO:0004619">
    <property type="term" value="F:phosphoglycerate mutase activity"/>
    <property type="evidence" value="ECO:0007669"/>
    <property type="project" value="UniProtKB-EC"/>
</dbReference>
<dbReference type="GO" id="GO:0006096">
    <property type="term" value="P:glycolytic process"/>
    <property type="evidence" value="ECO:0007669"/>
    <property type="project" value="UniProtKB-UniRule"/>
</dbReference>
<dbReference type="CDD" id="cd16011">
    <property type="entry name" value="iPGM_like"/>
    <property type="match status" value="1"/>
</dbReference>
<dbReference type="Gene3D" id="3.40.720.10">
    <property type="entry name" value="Alkaline Phosphatase, subunit A"/>
    <property type="match status" value="2"/>
</dbReference>
<dbReference type="HAMAP" id="MF_01402_B">
    <property type="entry name" value="ApgM_B"/>
    <property type="match status" value="1"/>
</dbReference>
<dbReference type="InterPro" id="IPR017850">
    <property type="entry name" value="Alkaline_phosphatase_core_sf"/>
</dbReference>
<dbReference type="InterPro" id="IPR023665">
    <property type="entry name" value="ApgAM_prokaryotes"/>
</dbReference>
<dbReference type="InterPro" id="IPR006124">
    <property type="entry name" value="Metalloenzyme"/>
</dbReference>
<dbReference type="InterPro" id="IPR004456">
    <property type="entry name" value="Pglycerate_mutase_ApgM"/>
</dbReference>
<dbReference type="NCBIfam" id="TIGR00306">
    <property type="entry name" value="apgM"/>
    <property type="match status" value="1"/>
</dbReference>
<dbReference type="NCBIfam" id="NF003160">
    <property type="entry name" value="PRK04135.1"/>
    <property type="match status" value="1"/>
</dbReference>
<dbReference type="PANTHER" id="PTHR31209">
    <property type="entry name" value="COFACTOR-INDEPENDENT PHOSPHOGLYCERATE MUTASE"/>
    <property type="match status" value="1"/>
</dbReference>
<dbReference type="PANTHER" id="PTHR31209:SF0">
    <property type="entry name" value="METALLOENZYME DOMAIN-CONTAINING PROTEIN"/>
    <property type="match status" value="1"/>
</dbReference>
<dbReference type="Pfam" id="PF01676">
    <property type="entry name" value="Metalloenzyme"/>
    <property type="match status" value="1"/>
</dbReference>
<dbReference type="Pfam" id="PF10143">
    <property type="entry name" value="PhosphMutase"/>
    <property type="match status" value="1"/>
</dbReference>
<dbReference type="PIRSF" id="PIRSF006392">
    <property type="entry name" value="IPGAM_arch"/>
    <property type="match status" value="1"/>
</dbReference>
<dbReference type="SUPFAM" id="SSF53649">
    <property type="entry name" value="Alkaline phosphatase-like"/>
    <property type="match status" value="1"/>
</dbReference>
<protein>
    <recommendedName>
        <fullName evidence="1">Probable 2,3-bisphosphoglycerate-independent phosphoglycerate mutase</fullName>
        <shortName evidence="1">BPG-independent PGAM</shortName>
        <shortName evidence="1">Phosphoglyceromutase</shortName>
        <shortName evidence="1">aPGAM</shortName>
        <ecNumber evidence="1">5.4.2.12</ecNumber>
    </recommendedName>
</protein>
<feature type="chain" id="PRO_1000068378" description="Probable 2,3-bisphosphoglycerate-independent phosphoglycerate mutase">
    <location>
        <begin position="1"/>
        <end position="408"/>
    </location>
</feature>
<comment type="function">
    <text evidence="1">Catalyzes the interconversion of 2-phosphoglycerate and 3-phosphoglycerate.</text>
</comment>
<comment type="catalytic activity">
    <reaction evidence="1">
        <text>(2R)-2-phosphoglycerate = (2R)-3-phosphoglycerate</text>
        <dbReference type="Rhea" id="RHEA:15901"/>
        <dbReference type="ChEBI" id="CHEBI:58272"/>
        <dbReference type="ChEBI" id="CHEBI:58289"/>
        <dbReference type="EC" id="5.4.2.12"/>
    </reaction>
</comment>
<comment type="pathway">
    <text evidence="1">Carbohydrate degradation; glycolysis; pyruvate from D-glyceraldehyde 3-phosphate: step 3/5.</text>
</comment>
<comment type="similarity">
    <text evidence="1">Belongs to the BPG-independent phosphoglycerate mutase family. A-PGAM subfamily.</text>
</comment>